<organism>
    <name type="scientific">Mus musculus</name>
    <name type="common">Mouse</name>
    <dbReference type="NCBI Taxonomy" id="10090"/>
    <lineage>
        <taxon>Eukaryota</taxon>
        <taxon>Metazoa</taxon>
        <taxon>Chordata</taxon>
        <taxon>Craniata</taxon>
        <taxon>Vertebrata</taxon>
        <taxon>Euteleostomi</taxon>
        <taxon>Mammalia</taxon>
        <taxon>Eutheria</taxon>
        <taxon>Euarchontoglires</taxon>
        <taxon>Glires</taxon>
        <taxon>Rodentia</taxon>
        <taxon>Myomorpha</taxon>
        <taxon>Muroidea</taxon>
        <taxon>Muridae</taxon>
        <taxon>Murinae</taxon>
        <taxon>Mus</taxon>
        <taxon>Mus</taxon>
    </lineage>
</organism>
<protein>
    <recommendedName>
        <fullName>Ubiquitin carboxyl-terminal hydrolase 30</fullName>
        <ecNumber evidence="1">3.4.19.12</ecNumber>
    </recommendedName>
    <alternativeName>
        <fullName>Deubiquitinating enzyme 30</fullName>
    </alternativeName>
    <alternativeName>
        <fullName>Ubiquitin thioesterase 30</fullName>
    </alternativeName>
    <alternativeName>
        <fullName>Ubiquitin-specific-processing protease 30</fullName>
        <shortName>Ub-specific protease 30</shortName>
    </alternativeName>
</protein>
<sequence>MLSSRAQAARTAADKALQRFLRTGAAVRYKVMKNWGVIGGIAAALAAGIYVIWGPITERKKRRKGLVPGLVNLGNTCFMNSLLQGLSACPAFVKWLEEFTTQYSRDQQGPHTHQCLSLTLLNLLKALSCQEVTEDEVLDASCLLDVLRMYRWQISSFEEQDAHELFHVITSSLEDERDRQPRVTHLFDVHSLEQQSEMAPRQVTCHTRGSPHPTTNHWKSQHPFHGRLTSNMVCKHCEHQSPVRFDTFDSLSLSIPAATWGHPLTLDHCLHHFISSESVRDVVCDNCTKIEARGTLTGEKVEHQRSTFVKQLKLGKLPQCLCIHLQRLSWSSHGTPLKRHEHVQFNEFLMMDFYKYRLLGHKPSQHGPKATENPGSAPEVQDAQAAPKPGLSQPGAPKTQIFLNGACSPSLLPALPSPVAFPLPVVPDYSSSTYLFRLMAVVVHHGDMHSGHFVTYRRSPPSAKNPLSTSNQWLWISDDTVRKASLQEVLSSSAYLLFYERVLSRVQQQGREYRSEE</sequence>
<comment type="function">
    <text evidence="1 6">Deubiquitinating enzyme tethered to the mitochondrial outer membrane that acts as a key inhibitor of mitophagy by counteracting the action of parkin (PRKN): hydrolyzes ubiquitin attached by parkin on target proteins, such as RHOT1/MIRO1 and TOMM20, thereby blocking parkin's ability to drive mitophagy. Preferentially cleaves 'Lys-6'- and 'Lys-11'-linked polyubiquitin chains, 2 types of linkage that participate in mitophagic signaling. Does not cleave efficiently polyubiquitin phosphorylated at 'Ser-65' (By similarity). Acts as negative regulator of mitochondrial fusion by mediating deubiquitination of MFN1 and MFN2 (PubMed:24513856).</text>
</comment>
<comment type="catalytic activity">
    <reaction evidence="1">
        <text>Thiol-dependent hydrolysis of ester, thioester, amide, peptide and isopeptide bonds formed by the C-terminal Gly of ubiquitin (a 76-residue protein attached to proteins as an intracellular targeting signal).</text>
        <dbReference type="EC" id="3.4.19.12"/>
    </reaction>
</comment>
<comment type="activity regulation">
    <text evidence="6">Inhibited by the diterpenoid derivative 15-oxospiramilactone (S3).</text>
</comment>
<comment type="subcellular location">
    <subcellularLocation>
        <location evidence="6">Mitochondrion outer membrane</location>
    </subcellularLocation>
</comment>
<comment type="PTM">
    <text evidence="1">Ubiquitinated by parkin (PRKN) at Lys-235 and Lys-289, leading to its degradation.</text>
</comment>
<comment type="similarity">
    <text evidence="7">Belongs to the peptidase C19 family.</text>
</comment>
<comment type="sequence caution" evidence="7">
    <conflict type="erroneous initiation">
        <sequence resource="EMBL-CDS" id="AAH38606"/>
    </conflict>
    <text>Extended N-terminus.</text>
</comment>
<reference key="1">
    <citation type="journal article" date="2005" name="Science">
        <title>The transcriptional landscape of the mammalian genome.</title>
        <authorList>
            <person name="Carninci P."/>
            <person name="Kasukawa T."/>
            <person name="Katayama S."/>
            <person name="Gough J."/>
            <person name="Frith M.C."/>
            <person name="Maeda N."/>
            <person name="Oyama R."/>
            <person name="Ravasi T."/>
            <person name="Lenhard B."/>
            <person name="Wells C."/>
            <person name="Kodzius R."/>
            <person name="Shimokawa K."/>
            <person name="Bajic V.B."/>
            <person name="Brenner S.E."/>
            <person name="Batalov S."/>
            <person name="Forrest A.R."/>
            <person name="Zavolan M."/>
            <person name="Davis M.J."/>
            <person name="Wilming L.G."/>
            <person name="Aidinis V."/>
            <person name="Allen J.E."/>
            <person name="Ambesi-Impiombato A."/>
            <person name="Apweiler R."/>
            <person name="Aturaliya R.N."/>
            <person name="Bailey T.L."/>
            <person name="Bansal M."/>
            <person name="Baxter L."/>
            <person name="Beisel K.W."/>
            <person name="Bersano T."/>
            <person name="Bono H."/>
            <person name="Chalk A.M."/>
            <person name="Chiu K.P."/>
            <person name="Choudhary V."/>
            <person name="Christoffels A."/>
            <person name="Clutterbuck D.R."/>
            <person name="Crowe M.L."/>
            <person name="Dalla E."/>
            <person name="Dalrymple B.P."/>
            <person name="de Bono B."/>
            <person name="Della Gatta G."/>
            <person name="di Bernardo D."/>
            <person name="Down T."/>
            <person name="Engstrom P."/>
            <person name="Fagiolini M."/>
            <person name="Faulkner G."/>
            <person name="Fletcher C.F."/>
            <person name="Fukushima T."/>
            <person name="Furuno M."/>
            <person name="Futaki S."/>
            <person name="Gariboldi M."/>
            <person name="Georgii-Hemming P."/>
            <person name="Gingeras T.R."/>
            <person name="Gojobori T."/>
            <person name="Green R.E."/>
            <person name="Gustincich S."/>
            <person name="Harbers M."/>
            <person name="Hayashi Y."/>
            <person name="Hensch T.K."/>
            <person name="Hirokawa N."/>
            <person name="Hill D."/>
            <person name="Huminiecki L."/>
            <person name="Iacono M."/>
            <person name="Ikeo K."/>
            <person name="Iwama A."/>
            <person name="Ishikawa T."/>
            <person name="Jakt M."/>
            <person name="Kanapin A."/>
            <person name="Katoh M."/>
            <person name="Kawasawa Y."/>
            <person name="Kelso J."/>
            <person name="Kitamura H."/>
            <person name="Kitano H."/>
            <person name="Kollias G."/>
            <person name="Krishnan S.P."/>
            <person name="Kruger A."/>
            <person name="Kummerfeld S.K."/>
            <person name="Kurochkin I.V."/>
            <person name="Lareau L.F."/>
            <person name="Lazarevic D."/>
            <person name="Lipovich L."/>
            <person name="Liu J."/>
            <person name="Liuni S."/>
            <person name="McWilliam S."/>
            <person name="Madan Babu M."/>
            <person name="Madera M."/>
            <person name="Marchionni L."/>
            <person name="Matsuda H."/>
            <person name="Matsuzawa S."/>
            <person name="Miki H."/>
            <person name="Mignone F."/>
            <person name="Miyake S."/>
            <person name="Morris K."/>
            <person name="Mottagui-Tabar S."/>
            <person name="Mulder N."/>
            <person name="Nakano N."/>
            <person name="Nakauchi H."/>
            <person name="Ng P."/>
            <person name="Nilsson R."/>
            <person name="Nishiguchi S."/>
            <person name="Nishikawa S."/>
            <person name="Nori F."/>
            <person name="Ohara O."/>
            <person name="Okazaki Y."/>
            <person name="Orlando V."/>
            <person name="Pang K.C."/>
            <person name="Pavan W.J."/>
            <person name="Pavesi G."/>
            <person name="Pesole G."/>
            <person name="Petrovsky N."/>
            <person name="Piazza S."/>
            <person name="Reed J."/>
            <person name="Reid J.F."/>
            <person name="Ring B.Z."/>
            <person name="Ringwald M."/>
            <person name="Rost B."/>
            <person name="Ruan Y."/>
            <person name="Salzberg S.L."/>
            <person name="Sandelin A."/>
            <person name="Schneider C."/>
            <person name="Schoenbach C."/>
            <person name="Sekiguchi K."/>
            <person name="Semple C.A."/>
            <person name="Seno S."/>
            <person name="Sessa L."/>
            <person name="Sheng Y."/>
            <person name="Shibata Y."/>
            <person name="Shimada H."/>
            <person name="Shimada K."/>
            <person name="Silva D."/>
            <person name="Sinclair B."/>
            <person name="Sperling S."/>
            <person name="Stupka E."/>
            <person name="Sugiura K."/>
            <person name="Sultana R."/>
            <person name="Takenaka Y."/>
            <person name="Taki K."/>
            <person name="Tammoja K."/>
            <person name="Tan S.L."/>
            <person name="Tang S."/>
            <person name="Taylor M.S."/>
            <person name="Tegner J."/>
            <person name="Teichmann S.A."/>
            <person name="Ueda H.R."/>
            <person name="van Nimwegen E."/>
            <person name="Verardo R."/>
            <person name="Wei C.L."/>
            <person name="Yagi K."/>
            <person name="Yamanishi H."/>
            <person name="Zabarovsky E."/>
            <person name="Zhu S."/>
            <person name="Zimmer A."/>
            <person name="Hide W."/>
            <person name="Bult C."/>
            <person name="Grimmond S.M."/>
            <person name="Teasdale R.D."/>
            <person name="Liu E.T."/>
            <person name="Brusic V."/>
            <person name="Quackenbush J."/>
            <person name="Wahlestedt C."/>
            <person name="Mattick J.S."/>
            <person name="Hume D.A."/>
            <person name="Kai C."/>
            <person name="Sasaki D."/>
            <person name="Tomaru Y."/>
            <person name="Fukuda S."/>
            <person name="Kanamori-Katayama M."/>
            <person name="Suzuki M."/>
            <person name="Aoki J."/>
            <person name="Arakawa T."/>
            <person name="Iida J."/>
            <person name="Imamura K."/>
            <person name="Itoh M."/>
            <person name="Kato T."/>
            <person name="Kawaji H."/>
            <person name="Kawagashira N."/>
            <person name="Kawashima T."/>
            <person name="Kojima M."/>
            <person name="Kondo S."/>
            <person name="Konno H."/>
            <person name="Nakano K."/>
            <person name="Ninomiya N."/>
            <person name="Nishio T."/>
            <person name="Okada M."/>
            <person name="Plessy C."/>
            <person name="Shibata K."/>
            <person name="Shiraki T."/>
            <person name="Suzuki S."/>
            <person name="Tagami M."/>
            <person name="Waki K."/>
            <person name="Watahiki A."/>
            <person name="Okamura-Oho Y."/>
            <person name="Suzuki H."/>
            <person name="Kawai J."/>
            <person name="Hayashizaki Y."/>
        </authorList>
    </citation>
    <scope>NUCLEOTIDE SEQUENCE [LARGE SCALE MRNA]</scope>
    <source>
        <strain>C57BL/6J</strain>
        <tissue>Embryo</tissue>
        <tissue>Lung</tissue>
        <tissue>Medulla oblongata</tissue>
    </source>
</reference>
<reference key="2">
    <citation type="journal article" date="2004" name="Genome Res.">
        <title>The status, quality, and expansion of the NIH full-length cDNA project: the Mammalian Gene Collection (MGC).</title>
        <authorList>
            <consortium name="The MGC Project Team"/>
        </authorList>
    </citation>
    <scope>NUCLEOTIDE SEQUENCE [LARGE SCALE MRNA]</scope>
    <source>
        <strain>FVB/N</strain>
        <tissue>Salivary gland</tissue>
    </source>
</reference>
<reference key="3">
    <citation type="journal article" date="2014" name="Cell Res.">
        <title>A small natural molecule promotes mitochondrial fusion through inhibition of the deubiquitinase USP30.</title>
        <authorList>
            <person name="Yue W."/>
            <person name="Chen Z."/>
            <person name="Liu H."/>
            <person name="Yan C."/>
            <person name="Chen M."/>
            <person name="Feng D."/>
            <person name="Yan C."/>
            <person name="Wu H."/>
            <person name="Du L."/>
            <person name="Wang Y."/>
            <person name="Liu J."/>
            <person name="Huang X."/>
            <person name="Xia L."/>
            <person name="Liu L."/>
            <person name="Wang X."/>
            <person name="Jin H."/>
            <person name="Wang J."/>
            <person name="Song Z."/>
            <person name="Hao X."/>
            <person name="Chen Q."/>
        </authorList>
    </citation>
    <scope>FUNCTION</scope>
    <scope>ACTIVITY REGULATION</scope>
    <scope>ACTIVE SITE</scope>
    <scope>SUBCELLULAR LOCATION</scope>
    <scope>MUTAGENESIS OF CYS-77; CYS-234; CYS-284 AND HIS-452</scope>
</reference>
<keyword id="KW-0378">Hydrolase</keyword>
<keyword id="KW-1017">Isopeptide bond</keyword>
<keyword id="KW-0472">Membrane</keyword>
<keyword id="KW-0496">Mitochondrion</keyword>
<keyword id="KW-1000">Mitochondrion outer membrane</keyword>
<keyword id="KW-0645">Protease</keyword>
<keyword id="KW-1185">Reference proteome</keyword>
<keyword id="KW-0788">Thiol protease</keyword>
<keyword id="KW-0812">Transmembrane</keyword>
<keyword id="KW-1133">Transmembrane helix</keyword>
<keyword id="KW-0832">Ubl conjugation</keyword>
<keyword id="KW-0833">Ubl conjugation pathway</keyword>
<gene>
    <name type="primary">Usp30</name>
</gene>
<dbReference type="EC" id="3.4.19.12" evidence="1"/>
<dbReference type="EMBL" id="AK078164">
    <property type="protein sequence ID" value="BAC37154.1"/>
    <property type="molecule type" value="mRNA"/>
</dbReference>
<dbReference type="EMBL" id="AK144578">
    <property type="protein sequence ID" value="BAE25944.1"/>
    <property type="molecule type" value="mRNA"/>
</dbReference>
<dbReference type="EMBL" id="AK162153">
    <property type="protein sequence ID" value="BAE36756.1"/>
    <property type="molecule type" value="mRNA"/>
</dbReference>
<dbReference type="EMBL" id="AK162269">
    <property type="protein sequence ID" value="BAE36827.1"/>
    <property type="molecule type" value="mRNA"/>
</dbReference>
<dbReference type="EMBL" id="BC038606">
    <property type="protein sequence ID" value="AAH38606.1"/>
    <property type="status" value="ALT_INIT"/>
    <property type="molecule type" value="mRNA"/>
</dbReference>
<dbReference type="CCDS" id="CCDS19558.1"/>
<dbReference type="RefSeq" id="NP_001028374.1">
    <property type="nucleotide sequence ID" value="NM_001033202.4"/>
</dbReference>
<dbReference type="SMR" id="Q3UN04"/>
<dbReference type="BioGRID" id="221523">
    <property type="interactions" value="2"/>
</dbReference>
<dbReference type="FunCoup" id="Q3UN04">
    <property type="interactions" value="4216"/>
</dbReference>
<dbReference type="STRING" id="10090.ENSMUSP00000031588"/>
<dbReference type="ChEMBL" id="CHEMBL4680032"/>
<dbReference type="iPTMnet" id="Q3UN04"/>
<dbReference type="PhosphoSitePlus" id="Q3UN04"/>
<dbReference type="SwissPalm" id="Q3UN04"/>
<dbReference type="PaxDb" id="10090-ENSMUSP00000031588"/>
<dbReference type="PeptideAtlas" id="Q3UN04"/>
<dbReference type="ProteomicsDB" id="298460"/>
<dbReference type="Pumba" id="Q3UN04"/>
<dbReference type="Antibodypedia" id="1728">
    <property type="antibodies" value="170 antibodies from 26 providers"/>
</dbReference>
<dbReference type="DNASU" id="100756"/>
<dbReference type="Ensembl" id="ENSMUST00000031588.12">
    <property type="protein sequence ID" value="ENSMUSP00000031588.8"/>
    <property type="gene ID" value="ENSMUSG00000029592.12"/>
</dbReference>
<dbReference type="GeneID" id="100756"/>
<dbReference type="KEGG" id="mmu:100756"/>
<dbReference type="UCSC" id="uc008yzc.1">
    <property type="organism name" value="mouse"/>
</dbReference>
<dbReference type="AGR" id="MGI:2140991"/>
<dbReference type="CTD" id="84749"/>
<dbReference type="MGI" id="MGI:2140991">
    <property type="gene designation" value="Usp30"/>
</dbReference>
<dbReference type="VEuPathDB" id="HostDB:ENSMUSG00000029592"/>
<dbReference type="eggNOG" id="KOG1867">
    <property type="taxonomic scope" value="Eukaryota"/>
</dbReference>
<dbReference type="GeneTree" id="ENSGT00550000075075"/>
<dbReference type="HOGENOM" id="CLU_008279_14_2_1"/>
<dbReference type="InParanoid" id="Q3UN04"/>
<dbReference type="OMA" id="CEREGND"/>
<dbReference type="OrthoDB" id="2248014at2759"/>
<dbReference type="PhylomeDB" id="Q3UN04"/>
<dbReference type="TreeFam" id="TF105781"/>
<dbReference type="Reactome" id="R-MMU-5689880">
    <property type="pathway name" value="Ub-specific processing proteases"/>
</dbReference>
<dbReference type="Reactome" id="R-MMU-9664873">
    <property type="pathway name" value="Pexophagy"/>
</dbReference>
<dbReference type="BioGRID-ORCS" id="100756">
    <property type="hits" value="7 hits in 77 CRISPR screens"/>
</dbReference>
<dbReference type="ChiTaRS" id="Usp30">
    <property type="organism name" value="mouse"/>
</dbReference>
<dbReference type="PRO" id="PR:Q3UN04"/>
<dbReference type="Proteomes" id="UP000000589">
    <property type="component" value="Chromosome 5"/>
</dbReference>
<dbReference type="RNAct" id="Q3UN04">
    <property type="molecule type" value="protein"/>
</dbReference>
<dbReference type="Bgee" id="ENSMUSG00000029592">
    <property type="expression patterns" value="Expressed in animal zygote and 225 other cell types or tissues"/>
</dbReference>
<dbReference type="ExpressionAtlas" id="Q3UN04">
    <property type="expression patterns" value="baseline and differential"/>
</dbReference>
<dbReference type="GO" id="GO:0005741">
    <property type="term" value="C:mitochondrial outer membrane"/>
    <property type="evidence" value="ECO:0000250"/>
    <property type="project" value="UniProtKB"/>
</dbReference>
<dbReference type="GO" id="GO:0005739">
    <property type="term" value="C:mitochondrion"/>
    <property type="evidence" value="ECO:0000314"/>
    <property type="project" value="UniProtKB"/>
</dbReference>
<dbReference type="GO" id="GO:0004843">
    <property type="term" value="F:cysteine-type deubiquitinase activity"/>
    <property type="evidence" value="ECO:0000315"/>
    <property type="project" value="UniProtKB"/>
</dbReference>
<dbReference type="GO" id="GO:0004197">
    <property type="term" value="F:cysteine-type endopeptidase activity"/>
    <property type="evidence" value="ECO:0000250"/>
    <property type="project" value="UniProtKB"/>
</dbReference>
<dbReference type="GO" id="GO:0000422">
    <property type="term" value="P:autophagy of mitochondrion"/>
    <property type="evidence" value="ECO:0000250"/>
    <property type="project" value="UniProtKB"/>
</dbReference>
<dbReference type="GO" id="GO:0008053">
    <property type="term" value="P:mitochondrial fusion"/>
    <property type="evidence" value="ECO:0000315"/>
    <property type="project" value="UniProtKB"/>
</dbReference>
<dbReference type="GO" id="GO:1901525">
    <property type="term" value="P:negative regulation of mitophagy"/>
    <property type="evidence" value="ECO:0007669"/>
    <property type="project" value="Ensembl"/>
</dbReference>
<dbReference type="GO" id="GO:0016579">
    <property type="term" value="P:protein deubiquitination"/>
    <property type="evidence" value="ECO:0000315"/>
    <property type="project" value="UniProtKB"/>
</dbReference>
<dbReference type="GO" id="GO:0035871">
    <property type="term" value="P:protein K11-linked deubiquitination"/>
    <property type="evidence" value="ECO:0000250"/>
    <property type="project" value="UniProtKB"/>
</dbReference>
<dbReference type="GO" id="GO:0044313">
    <property type="term" value="P:protein K6-linked deubiquitination"/>
    <property type="evidence" value="ECO:0000250"/>
    <property type="project" value="UniProtKB"/>
</dbReference>
<dbReference type="GO" id="GO:0006508">
    <property type="term" value="P:proteolysis"/>
    <property type="evidence" value="ECO:0007669"/>
    <property type="project" value="UniProtKB-KW"/>
</dbReference>
<dbReference type="CDD" id="cd02662">
    <property type="entry name" value="Peptidase_C19F"/>
    <property type="match status" value="1"/>
</dbReference>
<dbReference type="Gene3D" id="3.90.70.10">
    <property type="entry name" value="Cysteine proteinases"/>
    <property type="match status" value="2"/>
</dbReference>
<dbReference type="InterPro" id="IPR038765">
    <property type="entry name" value="Papain-like_cys_pep_sf"/>
</dbReference>
<dbReference type="InterPro" id="IPR050164">
    <property type="entry name" value="Peptidase_C19"/>
</dbReference>
<dbReference type="InterPro" id="IPR001394">
    <property type="entry name" value="Peptidase_C19_UCH"/>
</dbReference>
<dbReference type="InterPro" id="IPR018200">
    <property type="entry name" value="USP_CS"/>
</dbReference>
<dbReference type="InterPro" id="IPR028889">
    <property type="entry name" value="USP_dom"/>
</dbReference>
<dbReference type="PANTHER" id="PTHR24006">
    <property type="entry name" value="UBIQUITIN CARBOXYL-TERMINAL HYDROLASE"/>
    <property type="match status" value="1"/>
</dbReference>
<dbReference type="PANTHER" id="PTHR24006:SF888">
    <property type="entry name" value="UBIQUITIN CARBOXYL-TERMINAL HYDROLASE 30"/>
    <property type="match status" value="1"/>
</dbReference>
<dbReference type="Pfam" id="PF00443">
    <property type="entry name" value="UCH"/>
    <property type="match status" value="1"/>
</dbReference>
<dbReference type="SUPFAM" id="SSF54001">
    <property type="entry name" value="Cysteine proteinases"/>
    <property type="match status" value="1"/>
</dbReference>
<dbReference type="PROSITE" id="PS00972">
    <property type="entry name" value="USP_1"/>
    <property type="match status" value="1"/>
</dbReference>
<dbReference type="PROSITE" id="PS00973">
    <property type="entry name" value="USP_2"/>
    <property type="match status" value="1"/>
</dbReference>
<dbReference type="PROSITE" id="PS50235">
    <property type="entry name" value="USP_3"/>
    <property type="match status" value="1"/>
</dbReference>
<name>UBP30_MOUSE</name>
<proteinExistence type="evidence at protein level"/>
<evidence type="ECO:0000250" key="1">
    <source>
        <dbReference type="UniProtKB" id="Q70CQ3"/>
    </source>
</evidence>
<evidence type="ECO:0000255" key="2"/>
<evidence type="ECO:0000255" key="3">
    <source>
        <dbReference type="PROSITE-ProRule" id="PRU10092"/>
    </source>
</evidence>
<evidence type="ECO:0000255" key="4">
    <source>
        <dbReference type="PROSITE-ProRule" id="PRU10093"/>
    </source>
</evidence>
<evidence type="ECO:0000256" key="5">
    <source>
        <dbReference type="SAM" id="MobiDB-lite"/>
    </source>
</evidence>
<evidence type="ECO:0000269" key="6">
    <source>
    </source>
</evidence>
<evidence type="ECO:0000305" key="7"/>
<feature type="chain" id="PRO_0000377537" description="Ubiquitin carboxyl-terminal hydrolase 30">
    <location>
        <begin position="1"/>
        <end position="517"/>
    </location>
</feature>
<feature type="topological domain" description="Mitochondrial intermembrane" evidence="2">
    <location>
        <begin position="1"/>
        <end position="35"/>
    </location>
</feature>
<feature type="transmembrane region" description="Helical" evidence="2">
    <location>
        <begin position="36"/>
        <end position="56"/>
    </location>
</feature>
<feature type="topological domain" description="Cytoplasmic" evidence="2">
    <location>
        <begin position="57"/>
        <end position="517"/>
    </location>
</feature>
<feature type="domain" description="USP">
    <location>
        <begin position="68"/>
        <end position="502"/>
    </location>
</feature>
<feature type="region of interest" description="Disordered" evidence="5">
    <location>
        <begin position="198"/>
        <end position="221"/>
    </location>
</feature>
<feature type="region of interest" description="Disordered" evidence="5">
    <location>
        <begin position="364"/>
        <end position="395"/>
    </location>
</feature>
<feature type="compositionally biased region" description="Polar residues" evidence="5">
    <location>
        <begin position="204"/>
        <end position="218"/>
    </location>
</feature>
<feature type="active site" description="Nucleophile" evidence="3 4 6">
    <location>
        <position position="77"/>
    </location>
</feature>
<feature type="active site" description="Proton acceptor" evidence="3 4 6">
    <location>
        <position position="452"/>
    </location>
</feature>
<feature type="cross-link" description="Glycyl lysine isopeptide (Lys-Gly) (interchain with G-Cter in ubiquitin)" evidence="1">
    <location>
        <position position="235"/>
    </location>
</feature>
<feature type="cross-link" description="Glycyl lysine isopeptide (Lys-Gly) (interchain with G-Cter in ubiquitin)" evidence="1">
    <location>
        <position position="289"/>
    </location>
</feature>
<feature type="mutagenesis site" description="Loss of deubiquitinase activity and binding to diterpenoid derivative 15-oxospiramilactone (S3) inhibitor." evidence="6">
    <original>C</original>
    <variation>S</variation>
    <location>
        <position position="77"/>
    </location>
</feature>
<feature type="mutagenesis site" description="Does not affect binding to diterpenoid derivative 15-oxospiramilactone (S3) inhibitor." evidence="6">
    <original>C</original>
    <variation>S</variation>
    <location>
        <position position="234"/>
    </location>
</feature>
<feature type="mutagenesis site" description="Does not affect binding to diterpenoid derivative 15-oxospiramilactone (S3) inhibitor." evidence="6">
    <original>C</original>
    <variation>S</variation>
    <location>
        <position position="284"/>
    </location>
</feature>
<feature type="mutagenesis site" description="Does not affect binding to diterpenoid derivative 15-oxospiramilactone (S3) inhibitor." evidence="6">
    <original>H</original>
    <variation>A</variation>
    <location>
        <position position="452"/>
    </location>
</feature>
<accession>Q3UN04</accession>
<accession>Q3TS48</accession>
<accession>Q3TSB9</accession>
<accession>Q8BVI3</accession>
<accession>Q8CHW7</accession>